<comment type="function">
    <text evidence="1">Catalyzes the methylthiolation of N6-(dimethylallyl)adenosine (i(6)A), leading to the formation of 2-methylthio-N6-(dimethylallyl)adenosine (ms(2)i(6)A) at position 37 in tRNAs that read codons beginning with uridine.</text>
</comment>
<comment type="catalytic activity">
    <reaction evidence="1">
        <text>N(6)-dimethylallyladenosine(37) in tRNA + (sulfur carrier)-SH + AH2 + 2 S-adenosyl-L-methionine = 2-methylsulfanyl-N(6)-dimethylallyladenosine(37) in tRNA + (sulfur carrier)-H + 5'-deoxyadenosine + L-methionine + A + S-adenosyl-L-homocysteine + 2 H(+)</text>
        <dbReference type="Rhea" id="RHEA:37067"/>
        <dbReference type="Rhea" id="RHEA-COMP:10375"/>
        <dbReference type="Rhea" id="RHEA-COMP:10376"/>
        <dbReference type="Rhea" id="RHEA-COMP:14737"/>
        <dbReference type="Rhea" id="RHEA-COMP:14739"/>
        <dbReference type="ChEBI" id="CHEBI:13193"/>
        <dbReference type="ChEBI" id="CHEBI:15378"/>
        <dbReference type="ChEBI" id="CHEBI:17319"/>
        <dbReference type="ChEBI" id="CHEBI:17499"/>
        <dbReference type="ChEBI" id="CHEBI:29917"/>
        <dbReference type="ChEBI" id="CHEBI:57844"/>
        <dbReference type="ChEBI" id="CHEBI:57856"/>
        <dbReference type="ChEBI" id="CHEBI:59789"/>
        <dbReference type="ChEBI" id="CHEBI:64428"/>
        <dbReference type="ChEBI" id="CHEBI:74415"/>
        <dbReference type="ChEBI" id="CHEBI:74417"/>
        <dbReference type="EC" id="2.8.4.3"/>
    </reaction>
</comment>
<comment type="cofactor">
    <cofactor evidence="1">
        <name>[4Fe-4S] cluster</name>
        <dbReference type="ChEBI" id="CHEBI:49883"/>
    </cofactor>
    <text evidence="1">Binds 2 [4Fe-4S] clusters. One cluster is coordinated with 3 cysteines and an exchangeable S-adenosyl-L-methionine.</text>
</comment>
<comment type="subunit">
    <text evidence="1">Monomer.</text>
</comment>
<comment type="subcellular location">
    <subcellularLocation>
        <location evidence="1">Cytoplasm</location>
    </subcellularLocation>
</comment>
<comment type="similarity">
    <text evidence="1">Belongs to the methylthiotransferase family. MiaB subfamily.</text>
</comment>
<evidence type="ECO:0000255" key="1">
    <source>
        <dbReference type="HAMAP-Rule" id="MF_01864"/>
    </source>
</evidence>
<evidence type="ECO:0000255" key="2">
    <source>
        <dbReference type="PROSITE-ProRule" id="PRU01266"/>
    </source>
</evidence>
<evidence type="ECO:0000256" key="3">
    <source>
        <dbReference type="SAM" id="MobiDB-lite"/>
    </source>
</evidence>
<name>MIAB_THEFY</name>
<dbReference type="EC" id="2.8.4.3" evidence="1"/>
<dbReference type="EMBL" id="CP000088">
    <property type="protein sequence ID" value="AAZ54849.1"/>
    <property type="molecule type" value="Genomic_DNA"/>
</dbReference>
<dbReference type="SMR" id="Q47RR8"/>
<dbReference type="STRING" id="269800.Tfu_0811"/>
<dbReference type="KEGG" id="tfu:Tfu_0811"/>
<dbReference type="eggNOG" id="COG0621">
    <property type="taxonomic scope" value="Bacteria"/>
</dbReference>
<dbReference type="HOGENOM" id="CLU_018697_2_2_11"/>
<dbReference type="OrthoDB" id="9805215at2"/>
<dbReference type="GO" id="GO:0005829">
    <property type="term" value="C:cytosol"/>
    <property type="evidence" value="ECO:0007669"/>
    <property type="project" value="TreeGrafter"/>
</dbReference>
<dbReference type="GO" id="GO:0051539">
    <property type="term" value="F:4 iron, 4 sulfur cluster binding"/>
    <property type="evidence" value="ECO:0007669"/>
    <property type="project" value="UniProtKB-UniRule"/>
</dbReference>
<dbReference type="GO" id="GO:0046872">
    <property type="term" value="F:metal ion binding"/>
    <property type="evidence" value="ECO:0007669"/>
    <property type="project" value="UniProtKB-KW"/>
</dbReference>
<dbReference type="GO" id="GO:0035597">
    <property type="term" value="F:N6-isopentenyladenosine methylthiotransferase activity"/>
    <property type="evidence" value="ECO:0007669"/>
    <property type="project" value="TreeGrafter"/>
</dbReference>
<dbReference type="CDD" id="cd01335">
    <property type="entry name" value="Radical_SAM"/>
    <property type="match status" value="1"/>
</dbReference>
<dbReference type="FunFam" id="3.40.50.12160:FF:000003">
    <property type="entry name" value="CDK5 regulatory subunit-associated protein 1"/>
    <property type="match status" value="1"/>
</dbReference>
<dbReference type="FunFam" id="3.80.30.20:FF:000001">
    <property type="entry name" value="tRNA-2-methylthio-N(6)-dimethylallyladenosine synthase 2"/>
    <property type="match status" value="1"/>
</dbReference>
<dbReference type="Gene3D" id="3.40.50.12160">
    <property type="entry name" value="Methylthiotransferase, N-terminal domain"/>
    <property type="match status" value="1"/>
</dbReference>
<dbReference type="Gene3D" id="3.80.30.20">
    <property type="entry name" value="tm_1862 like domain"/>
    <property type="match status" value="1"/>
</dbReference>
<dbReference type="HAMAP" id="MF_01864">
    <property type="entry name" value="tRNA_metthiotr_MiaB"/>
    <property type="match status" value="1"/>
</dbReference>
<dbReference type="InterPro" id="IPR006638">
    <property type="entry name" value="Elp3/MiaA/NifB-like_rSAM"/>
</dbReference>
<dbReference type="InterPro" id="IPR005839">
    <property type="entry name" value="Methylthiotransferase"/>
</dbReference>
<dbReference type="InterPro" id="IPR020612">
    <property type="entry name" value="Methylthiotransferase_CS"/>
</dbReference>
<dbReference type="InterPro" id="IPR013848">
    <property type="entry name" value="Methylthiotransferase_N"/>
</dbReference>
<dbReference type="InterPro" id="IPR038135">
    <property type="entry name" value="Methylthiotransferase_N_sf"/>
</dbReference>
<dbReference type="InterPro" id="IPR006463">
    <property type="entry name" value="MiaB_methiolase"/>
</dbReference>
<dbReference type="InterPro" id="IPR007197">
    <property type="entry name" value="rSAM"/>
</dbReference>
<dbReference type="InterPro" id="IPR023404">
    <property type="entry name" value="rSAM_horseshoe"/>
</dbReference>
<dbReference type="InterPro" id="IPR002792">
    <property type="entry name" value="TRAM_dom"/>
</dbReference>
<dbReference type="NCBIfam" id="TIGR01574">
    <property type="entry name" value="miaB-methiolase"/>
    <property type="match status" value="1"/>
</dbReference>
<dbReference type="NCBIfam" id="TIGR00089">
    <property type="entry name" value="MiaB/RimO family radical SAM methylthiotransferase"/>
    <property type="match status" value="1"/>
</dbReference>
<dbReference type="PANTHER" id="PTHR43020">
    <property type="entry name" value="CDK5 REGULATORY SUBUNIT-ASSOCIATED PROTEIN 1"/>
    <property type="match status" value="1"/>
</dbReference>
<dbReference type="PANTHER" id="PTHR43020:SF2">
    <property type="entry name" value="MITOCHONDRIAL TRNA METHYLTHIOTRANSFERASE CDK5RAP1"/>
    <property type="match status" value="1"/>
</dbReference>
<dbReference type="Pfam" id="PF04055">
    <property type="entry name" value="Radical_SAM"/>
    <property type="match status" value="1"/>
</dbReference>
<dbReference type="Pfam" id="PF00919">
    <property type="entry name" value="UPF0004"/>
    <property type="match status" value="1"/>
</dbReference>
<dbReference type="SFLD" id="SFLDF00273">
    <property type="entry name" value="(dimethylallyl)adenosine_tRNA"/>
    <property type="match status" value="1"/>
</dbReference>
<dbReference type="SFLD" id="SFLDG01082">
    <property type="entry name" value="B12-binding_domain_containing"/>
    <property type="match status" value="1"/>
</dbReference>
<dbReference type="SFLD" id="SFLDG01061">
    <property type="entry name" value="methylthiotransferase"/>
    <property type="match status" value="1"/>
</dbReference>
<dbReference type="SMART" id="SM00729">
    <property type="entry name" value="Elp3"/>
    <property type="match status" value="1"/>
</dbReference>
<dbReference type="SUPFAM" id="SSF102114">
    <property type="entry name" value="Radical SAM enzymes"/>
    <property type="match status" value="1"/>
</dbReference>
<dbReference type="PROSITE" id="PS51449">
    <property type="entry name" value="MTTASE_N"/>
    <property type="match status" value="1"/>
</dbReference>
<dbReference type="PROSITE" id="PS01278">
    <property type="entry name" value="MTTASE_RADICAL"/>
    <property type="match status" value="1"/>
</dbReference>
<dbReference type="PROSITE" id="PS51918">
    <property type="entry name" value="RADICAL_SAM"/>
    <property type="match status" value="1"/>
</dbReference>
<dbReference type="PROSITE" id="PS50926">
    <property type="entry name" value="TRAM"/>
    <property type="match status" value="1"/>
</dbReference>
<keyword id="KW-0004">4Fe-4S</keyword>
<keyword id="KW-0963">Cytoplasm</keyword>
<keyword id="KW-0408">Iron</keyword>
<keyword id="KW-0411">Iron-sulfur</keyword>
<keyword id="KW-0479">Metal-binding</keyword>
<keyword id="KW-0949">S-adenosyl-L-methionine</keyword>
<keyword id="KW-0808">Transferase</keyword>
<keyword id="KW-0819">tRNA processing</keyword>
<feature type="chain" id="PRO_0000374609" description="tRNA-2-methylthio-N(6)-dimethylallyladenosine synthase">
    <location>
        <begin position="1"/>
        <end position="494"/>
    </location>
</feature>
<feature type="domain" description="MTTase N-terminal" evidence="1">
    <location>
        <begin position="5"/>
        <end position="121"/>
    </location>
</feature>
<feature type="domain" description="Radical SAM core" evidence="2">
    <location>
        <begin position="144"/>
        <end position="374"/>
    </location>
</feature>
<feature type="domain" description="TRAM" evidence="1">
    <location>
        <begin position="377"/>
        <end position="446"/>
    </location>
</feature>
<feature type="region of interest" description="Disordered" evidence="3">
    <location>
        <begin position="458"/>
        <end position="494"/>
    </location>
</feature>
<feature type="compositionally biased region" description="Basic and acidic residues" evidence="3">
    <location>
        <begin position="458"/>
        <end position="468"/>
    </location>
</feature>
<feature type="binding site" evidence="1">
    <location>
        <position position="14"/>
    </location>
    <ligand>
        <name>[4Fe-4S] cluster</name>
        <dbReference type="ChEBI" id="CHEBI:49883"/>
        <label>1</label>
    </ligand>
</feature>
<feature type="binding site" evidence="1">
    <location>
        <position position="50"/>
    </location>
    <ligand>
        <name>[4Fe-4S] cluster</name>
        <dbReference type="ChEBI" id="CHEBI:49883"/>
        <label>1</label>
    </ligand>
</feature>
<feature type="binding site" evidence="1">
    <location>
        <position position="84"/>
    </location>
    <ligand>
        <name>[4Fe-4S] cluster</name>
        <dbReference type="ChEBI" id="CHEBI:49883"/>
        <label>1</label>
    </ligand>
</feature>
<feature type="binding site" evidence="1">
    <location>
        <position position="158"/>
    </location>
    <ligand>
        <name>[4Fe-4S] cluster</name>
        <dbReference type="ChEBI" id="CHEBI:49883"/>
        <label>2</label>
        <note>4Fe-4S-S-AdoMet</note>
    </ligand>
</feature>
<feature type="binding site" evidence="1">
    <location>
        <position position="162"/>
    </location>
    <ligand>
        <name>[4Fe-4S] cluster</name>
        <dbReference type="ChEBI" id="CHEBI:49883"/>
        <label>2</label>
        <note>4Fe-4S-S-AdoMet</note>
    </ligand>
</feature>
<feature type="binding site" evidence="1">
    <location>
        <position position="165"/>
    </location>
    <ligand>
        <name>[4Fe-4S] cluster</name>
        <dbReference type="ChEBI" id="CHEBI:49883"/>
        <label>2</label>
        <note>4Fe-4S-S-AdoMet</note>
    </ligand>
</feature>
<gene>
    <name evidence="1" type="primary">miaB</name>
    <name type="ordered locus">Tfu_0811</name>
</gene>
<proteinExistence type="inferred from homology"/>
<accession>Q47RR8</accession>
<organism>
    <name type="scientific">Thermobifida fusca (strain YX)</name>
    <dbReference type="NCBI Taxonomy" id="269800"/>
    <lineage>
        <taxon>Bacteria</taxon>
        <taxon>Bacillati</taxon>
        <taxon>Actinomycetota</taxon>
        <taxon>Actinomycetes</taxon>
        <taxon>Streptosporangiales</taxon>
        <taxon>Nocardiopsidaceae</taxon>
        <taxon>Thermobifida</taxon>
    </lineage>
</organism>
<sequence length="494" mass="54948">MSQSRTYQVRTYGCQMNVHDSERLSGLLEAAGYQRAAEGTTPDVVVFNTCAVRENADNRLYGNLGQLRPVKDANPDMQIAVGGCLAQKDRGEIIRRAPWVDVVFGTHNIGSLPALLERARVQREAQVEIVESLERFPSTLPTRRESVYAAWVAISVGCNNTCTFCIVPALRGKEKDRRPGDILAEIRAVVAEGAIEVTLLGQNVNAYGSEFGDRQAFSKLLRACGEIEGLERVRFTSPHPRDFTDDVIAAMAETPNVMPQLHMPLQSGSDRILRAMRRSYRAERFLRIVEKVREAIPDAAITTDVIVGFPGETEEDFAETLRVMEEVRFAHAFTFQYSKRPGTPAASMDNQVPREVVKERYQRLLELQERISEEENAKFVGREVEVLVAEGEGRKDDVHRRMSGRARDNRLVHFAVDEGVTVRPGDMVTVEVTYAAPHHLVADSGIRNLRRTRAGDAWEARNAPERRPTGVLLGMPKVGAPEPQPSVVGGCCDS</sequence>
<reference key="1">
    <citation type="journal article" date="2007" name="J. Bacteriol.">
        <title>Genome sequence and analysis of the soil cellulolytic actinomycete Thermobifida fusca YX.</title>
        <authorList>
            <person name="Lykidis A."/>
            <person name="Mavromatis K."/>
            <person name="Ivanova N."/>
            <person name="Anderson I."/>
            <person name="Land M."/>
            <person name="DiBartolo G."/>
            <person name="Martinez M."/>
            <person name="Lapidus A."/>
            <person name="Lucas S."/>
            <person name="Copeland A."/>
            <person name="Richardson P."/>
            <person name="Wilson D.B."/>
            <person name="Kyrpides N."/>
        </authorList>
    </citation>
    <scope>NUCLEOTIDE SEQUENCE [LARGE SCALE GENOMIC DNA]</scope>
    <source>
        <strain>YX</strain>
    </source>
</reference>
<protein>
    <recommendedName>
        <fullName evidence="1">tRNA-2-methylthio-N(6)-dimethylallyladenosine synthase</fullName>
        <ecNumber evidence="1">2.8.4.3</ecNumber>
    </recommendedName>
    <alternativeName>
        <fullName evidence="1">(Dimethylallyl)adenosine tRNA methylthiotransferase MiaB</fullName>
    </alternativeName>
    <alternativeName>
        <fullName evidence="1">tRNA-i(6)A37 methylthiotransferase</fullName>
    </alternativeName>
</protein>